<proteinExistence type="inferred from homology"/>
<name>EIF3G_CANGA</name>
<feature type="chain" id="PRO_0000365439" description="Eukaryotic translation initiation factor 3 subunit G">
    <location>
        <begin position="1"/>
        <end position="274"/>
    </location>
</feature>
<feature type="domain" description="RRM" evidence="1">
    <location>
        <begin position="189"/>
        <end position="268"/>
    </location>
</feature>
<feature type="region of interest" description="Disordered" evidence="2">
    <location>
        <begin position="138"/>
        <end position="184"/>
    </location>
</feature>
<feature type="compositionally biased region" description="Low complexity" evidence="2">
    <location>
        <begin position="138"/>
        <end position="150"/>
    </location>
</feature>
<feature type="compositionally biased region" description="Basic and acidic residues" evidence="2">
    <location>
        <begin position="170"/>
        <end position="184"/>
    </location>
</feature>
<feature type="modified residue" description="Phosphoserine" evidence="1">
    <location>
        <position position="63"/>
    </location>
</feature>
<feature type="modified residue" description="Phosphoserine" evidence="1">
    <location>
        <position position="129"/>
    </location>
</feature>
<feature type="modified residue" description="Phosphoserine" evidence="1">
    <location>
        <position position="166"/>
    </location>
</feature>
<organism>
    <name type="scientific">Candida glabrata (strain ATCC 2001 / BCRC 20586 / JCM 3761 / NBRC 0622 / NRRL Y-65 / CBS 138)</name>
    <name type="common">Yeast</name>
    <name type="synonym">Nakaseomyces glabratus</name>
    <dbReference type="NCBI Taxonomy" id="284593"/>
    <lineage>
        <taxon>Eukaryota</taxon>
        <taxon>Fungi</taxon>
        <taxon>Dikarya</taxon>
        <taxon>Ascomycota</taxon>
        <taxon>Saccharomycotina</taxon>
        <taxon>Saccharomycetes</taxon>
        <taxon>Saccharomycetales</taxon>
        <taxon>Saccharomycetaceae</taxon>
        <taxon>Nakaseomyces</taxon>
    </lineage>
</organism>
<protein>
    <recommendedName>
        <fullName evidence="1">Eukaryotic translation initiation factor 3 subunit G</fullName>
        <shortName evidence="1">eIF3g</shortName>
    </recommendedName>
    <alternativeName>
        <fullName evidence="1">Eukaryotic translation initiation factor 3 RNA-binding subunit</fullName>
        <shortName evidence="1">eIF-3 RNA-binding subunit</shortName>
    </alternativeName>
    <alternativeName>
        <fullName evidence="1">Translation initiation factor eIF3 p33 subunit homolog</fullName>
        <shortName evidence="1">eIF3 p33 homolog</shortName>
    </alternativeName>
</protein>
<dbReference type="EMBL" id="CR380954">
    <property type="protein sequence ID" value="CAG59931.1"/>
    <property type="molecule type" value="Genomic_DNA"/>
</dbReference>
<dbReference type="RefSeq" id="XP_446998.1">
    <property type="nucleotide sequence ID" value="XM_446998.1"/>
</dbReference>
<dbReference type="SMR" id="Q6FRZ6"/>
<dbReference type="FunCoup" id="Q6FRZ6">
    <property type="interactions" value="1173"/>
</dbReference>
<dbReference type="STRING" id="284593.Q6FRZ6"/>
<dbReference type="EnsemblFungi" id="CAGL0H04675g-T">
    <property type="protein sequence ID" value="CAGL0H04675g-T-p1"/>
    <property type="gene ID" value="CAGL0H04675g"/>
</dbReference>
<dbReference type="KEGG" id="cgr:2888472"/>
<dbReference type="CGD" id="CAL0131956">
    <property type="gene designation" value="CAGL0H04675g"/>
</dbReference>
<dbReference type="VEuPathDB" id="FungiDB:CAGL0H04675g"/>
<dbReference type="eggNOG" id="KOG0122">
    <property type="taxonomic scope" value="Eukaryota"/>
</dbReference>
<dbReference type="HOGENOM" id="CLU_034595_0_0_1"/>
<dbReference type="InParanoid" id="Q6FRZ6"/>
<dbReference type="OMA" id="ICQGDHF"/>
<dbReference type="Proteomes" id="UP000002428">
    <property type="component" value="Chromosome H"/>
</dbReference>
<dbReference type="GO" id="GO:0016282">
    <property type="term" value="C:eukaryotic 43S preinitiation complex"/>
    <property type="evidence" value="ECO:0007669"/>
    <property type="project" value="UniProtKB-UniRule"/>
</dbReference>
<dbReference type="GO" id="GO:0033290">
    <property type="term" value="C:eukaryotic 48S preinitiation complex"/>
    <property type="evidence" value="ECO:0007669"/>
    <property type="project" value="UniProtKB-UniRule"/>
</dbReference>
<dbReference type="GO" id="GO:0071540">
    <property type="term" value="C:eukaryotic translation initiation factor 3 complex, eIF3e"/>
    <property type="evidence" value="ECO:0007669"/>
    <property type="project" value="EnsemblFungi"/>
</dbReference>
<dbReference type="GO" id="GO:0071541">
    <property type="term" value="C:eukaryotic translation initiation factor 3 complex, eIF3m"/>
    <property type="evidence" value="ECO:0007669"/>
    <property type="project" value="EnsemblFungi"/>
</dbReference>
<dbReference type="GO" id="GO:0043614">
    <property type="term" value="C:multi-eIF complex"/>
    <property type="evidence" value="ECO:0007669"/>
    <property type="project" value="EnsemblFungi"/>
</dbReference>
<dbReference type="GO" id="GO:0003723">
    <property type="term" value="F:RNA binding"/>
    <property type="evidence" value="ECO:0007669"/>
    <property type="project" value="UniProtKB-UniRule"/>
</dbReference>
<dbReference type="GO" id="GO:0003743">
    <property type="term" value="F:translation initiation factor activity"/>
    <property type="evidence" value="ECO:0007669"/>
    <property type="project" value="UniProtKB-UniRule"/>
</dbReference>
<dbReference type="GO" id="GO:0001732">
    <property type="term" value="P:formation of cytoplasmic translation initiation complex"/>
    <property type="evidence" value="ECO:0007669"/>
    <property type="project" value="UniProtKB-UniRule"/>
</dbReference>
<dbReference type="GO" id="GO:0002188">
    <property type="term" value="P:translation reinitiation"/>
    <property type="evidence" value="ECO:0007669"/>
    <property type="project" value="EnsemblFungi"/>
</dbReference>
<dbReference type="GO" id="GO:0006415">
    <property type="term" value="P:translational termination"/>
    <property type="evidence" value="ECO:0007669"/>
    <property type="project" value="EnsemblFungi"/>
</dbReference>
<dbReference type="CDD" id="cd12933">
    <property type="entry name" value="eIF3G"/>
    <property type="match status" value="1"/>
</dbReference>
<dbReference type="CDD" id="cd12408">
    <property type="entry name" value="RRM_eIF3G_like"/>
    <property type="match status" value="1"/>
</dbReference>
<dbReference type="FunFam" id="3.30.70.330:FF:000716">
    <property type="entry name" value="Eukaryotic translation initiation factor 3 subunit G"/>
    <property type="match status" value="1"/>
</dbReference>
<dbReference type="Gene3D" id="3.30.70.330">
    <property type="match status" value="1"/>
</dbReference>
<dbReference type="HAMAP" id="MF_03006">
    <property type="entry name" value="eIF3g"/>
    <property type="match status" value="1"/>
</dbReference>
<dbReference type="InterPro" id="IPR017334">
    <property type="entry name" value="eIF3_g"/>
</dbReference>
<dbReference type="InterPro" id="IPR024675">
    <property type="entry name" value="eIF3g_N"/>
</dbReference>
<dbReference type="InterPro" id="IPR034240">
    <property type="entry name" value="eIF3G_RRM"/>
</dbReference>
<dbReference type="InterPro" id="IPR012677">
    <property type="entry name" value="Nucleotide-bd_a/b_plait_sf"/>
</dbReference>
<dbReference type="InterPro" id="IPR035979">
    <property type="entry name" value="RBD_domain_sf"/>
</dbReference>
<dbReference type="InterPro" id="IPR000504">
    <property type="entry name" value="RRM_dom"/>
</dbReference>
<dbReference type="PANTHER" id="PTHR10352">
    <property type="entry name" value="EUKARYOTIC TRANSLATION INITIATION FACTOR 3 SUBUNIT G"/>
    <property type="match status" value="1"/>
</dbReference>
<dbReference type="Pfam" id="PF12353">
    <property type="entry name" value="eIF3g"/>
    <property type="match status" value="1"/>
</dbReference>
<dbReference type="Pfam" id="PF00076">
    <property type="entry name" value="RRM_1"/>
    <property type="match status" value="1"/>
</dbReference>
<dbReference type="PIRSF" id="PIRSF037949">
    <property type="entry name" value="Transl_init_eIF-3_RNA-bind"/>
    <property type="match status" value="1"/>
</dbReference>
<dbReference type="SMART" id="SM00360">
    <property type="entry name" value="RRM"/>
    <property type="match status" value="1"/>
</dbReference>
<dbReference type="SUPFAM" id="SSF54928">
    <property type="entry name" value="RNA-binding domain, RBD"/>
    <property type="match status" value="1"/>
</dbReference>
<dbReference type="PROSITE" id="PS50102">
    <property type="entry name" value="RRM"/>
    <property type="match status" value="1"/>
</dbReference>
<comment type="function">
    <text evidence="1">RNA-binding component of the eukaryotic translation initiation factor 3 (eIF-3) complex, which is involved in protein synthesis of a specialized repertoire of mRNAs and, together with other initiation factors, stimulates binding of mRNA and methionyl-tRNAi to the 40S ribosome. The eIF-3 complex specifically targets and initiates translation of a subset of mRNAs involved in cell proliferation. This subunit can bind 18S rRNA.</text>
</comment>
<comment type="subunit">
    <text evidence="1">Component of the eukaryotic translation initiation factor 3 (eIF-3) complex.</text>
</comment>
<comment type="subcellular location">
    <subcellularLocation>
        <location evidence="1">Cytoplasm</location>
    </subcellularLocation>
</comment>
<comment type="similarity">
    <text evidence="1">Belongs to the eIF-3 subunit G family.</text>
</comment>
<keyword id="KW-0963">Cytoplasm</keyword>
<keyword id="KW-0396">Initiation factor</keyword>
<keyword id="KW-0597">Phosphoprotein</keyword>
<keyword id="KW-0648">Protein biosynthesis</keyword>
<keyword id="KW-1185">Reference proteome</keyword>
<keyword id="KW-0694">RNA-binding</keyword>
<evidence type="ECO:0000255" key="1">
    <source>
        <dbReference type="HAMAP-Rule" id="MF_03006"/>
    </source>
</evidence>
<evidence type="ECO:0000256" key="2">
    <source>
        <dbReference type="SAM" id="MobiDB-lite"/>
    </source>
</evidence>
<sequence length="274" mass="30382">MSQAAPEIIENPDGTKSIITYKTENGEKYKIIQKVRDVKITERVHRSVAERRSWAKFGAEKNSPPGPNNSTTQFGETVELLLDRNWRKIIEARTQKLKASASKTITCRLCGNAHYTMNCPFKTILSEISALEDPAAAAAGPGLPEEVPAGKADSGITATGAYVPPSRRAGARDPSSDAYRDARERDDSCTLKILQLNENADENTLRNELLFPFEPIQKVVVVRNKETGRSRGLAFVTFINEDMAEKALHFLDGRGFMNLILRVDWSKPKVPAPQ</sequence>
<accession>Q6FRZ6</accession>
<reference key="1">
    <citation type="journal article" date="2004" name="Nature">
        <title>Genome evolution in yeasts.</title>
        <authorList>
            <person name="Dujon B."/>
            <person name="Sherman D."/>
            <person name="Fischer G."/>
            <person name="Durrens P."/>
            <person name="Casaregola S."/>
            <person name="Lafontaine I."/>
            <person name="de Montigny J."/>
            <person name="Marck C."/>
            <person name="Neuveglise C."/>
            <person name="Talla E."/>
            <person name="Goffard N."/>
            <person name="Frangeul L."/>
            <person name="Aigle M."/>
            <person name="Anthouard V."/>
            <person name="Babour A."/>
            <person name="Barbe V."/>
            <person name="Barnay S."/>
            <person name="Blanchin S."/>
            <person name="Beckerich J.-M."/>
            <person name="Beyne E."/>
            <person name="Bleykasten C."/>
            <person name="Boisrame A."/>
            <person name="Boyer J."/>
            <person name="Cattolico L."/>
            <person name="Confanioleri F."/>
            <person name="de Daruvar A."/>
            <person name="Despons L."/>
            <person name="Fabre E."/>
            <person name="Fairhead C."/>
            <person name="Ferry-Dumazet H."/>
            <person name="Groppi A."/>
            <person name="Hantraye F."/>
            <person name="Hennequin C."/>
            <person name="Jauniaux N."/>
            <person name="Joyet P."/>
            <person name="Kachouri R."/>
            <person name="Kerrest A."/>
            <person name="Koszul R."/>
            <person name="Lemaire M."/>
            <person name="Lesur I."/>
            <person name="Ma L."/>
            <person name="Muller H."/>
            <person name="Nicaud J.-M."/>
            <person name="Nikolski M."/>
            <person name="Oztas S."/>
            <person name="Ozier-Kalogeropoulos O."/>
            <person name="Pellenz S."/>
            <person name="Potier S."/>
            <person name="Richard G.-F."/>
            <person name="Straub M.-L."/>
            <person name="Suleau A."/>
            <person name="Swennen D."/>
            <person name="Tekaia F."/>
            <person name="Wesolowski-Louvel M."/>
            <person name="Westhof E."/>
            <person name="Wirth B."/>
            <person name="Zeniou-Meyer M."/>
            <person name="Zivanovic Y."/>
            <person name="Bolotin-Fukuhara M."/>
            <person name="Thierry A."/>
            <person name="Bouchier C."/>
            <person name="Caudron B."/>
            <person name="Scarpelli C."/>
            <person name="Gaillardin C."/>
            <person name="Weissenbach J."/>
            <person name="Wincker P."/>
            <person name="Souciet J.-L."/>
        </authorList>
    </citation>
    <scope>NUCLEOTIDE SEQUENCE [LARGE SCALE GENOMIC DNA]</scope>
    <source>
        <strain>ATCC 2001 / BCRC 20586 / JCM 3761 / NBRC 0622 / NRRL Y-65 / CBS 138</strain>
    </source>
</reference>
<gene>
    <name evidence="1" type="primary">TIF35</name>
    <name type="ordered locus">CAGL0H04675g</name>
</gene>